<name>RF3_SHESM</name>
<sequence length="526" mass="59388">MSDNKVEVDKRRTFAIISHPDAGKTTITEKVLLFGNALQKAGTVKGKKSGQHAKSDWMEMEKDRGISITTSVMQFPYGGALVNLLDTPGHEDFSEDTYRTLTAVDSCLMVIDSAKGVEDRTIKLMEVTRLRDTPIVTFMNKLDRDIRDPIELMDEVEDVLNIACAPITWPIGSGKEFKGVYHILRDEVVLYQSGMGHTIQERRVIEGIDNPELDKAIGSYAADLRDEMELVRGASNEFDHQAFLKGELTPVFFGTALGNFGVDHILDGIVEWAPKPLPRESDARMIMPDEEKFTGFVFKIQANMDPKHRDRVAFMRVCSGRYEQGMKMHHVRIGKDVNVSDALTFMAGDRERAEVAYPGDIIGLHNHGTIRIGDTFTQGEKFRFTGVPNFAPEMFRRIRLRDPLKQKQLLKGLVQLSEEGAVQVFRPLDTNDLIVGAVGVLQFEVVVGRLKSEYNVEAIYEGISVSTARWVYCKDERKLEEFRRKCSQNLALDGGDNLTYIAPTMVNLNLSMERYPDIEFAKTREH</sequence>
<keyword id="KW-0963">Cytoplasm</keyword>
<keyword id="KW-0342">GTP-binding</keyword>
<keyword id="KW-0547">Nucleotide-binding</keyword>
<keyword id="KW-0648">Protein biosynthesis</keyword>
<gene>
    <name evidence="1" type="primary">prfC</name>
    <name type="ordered locus">Shewmr4_1033</name>
</gene>
<evidence type="ECO:0000255" key="1">
    <source>
        <dbReference type="HAMAP-Rule" id="MF_00072"/>
    </source>
</evidence>
<dbReference type="EMBL" id="CP000446">
    <property type="protein sequence ID" value="ABI38113.1"/>
    <property type="molecule type" value="Genomic_DNA"/>
</dbReference>
<dbReference type="RefSeq" id="WP_011621824.1">
    <property type="nucleotide sequence ID" value="NC_008321.1"/>
</dbReference>
<dbReference type="SMR" id="Q0HLF4"/>
<dbReference type="KEGG" id="she:Shewmr4_1033"/>
<dbReference type="HOGENOM" id="CLU_002794_2_1_6"/>
<dbReference type="GO" id="GO:0005829">
    <property type="term" value="C:cytosol"/>
    <property type="evidence" value="ECO:0007669"/>
    <property type="project" value="TreeGrafter"/>
</dbReference>
<dbReference type="GO" id="GO:0005525">
    <property type="term" value="F:GTP binding"/>
    <property type="evidence" value="ECO:0007669"/>
    <property type="project" value="UniProtKB-UniRule"/>
</dbReference>
<dbReference type="GO" id="GO:0003924">
    <property type="term" value="F:GTPase activity"/>
    <property type="evidence" value="ECO:0007669"/>
    <property type="project" value="InterPro"/>
</dbReference>
<dbReference type="GO" id="GO:0097216">
    <property type="term" value="F:guanosine tetraphosphate binding"/>
    <property type="evidence" value="ECO:0007669"/>
    <property type="project" value="UniProtKB-ARBA"/>
</dbReference>
<dbReference type="GO" id="GO:0016150">
    <property type="term" value="F:translation release factor activity, codon nonspecific"/>
    <property type="evidence" value="ECO:0007669"/>
    <property type="project" value="TreeGrafter"/>
</dbReference>
<dbReference type="GO" id="GO:0016149">
    <property type="term" value="F:translation release factor activity, codon specific"/>
    <property type="evidence" value="ECO:0007669"/>
    <property type="project" value="UniProtKB-UniRule"/>
</dbReference>
<dbReference type="GO" id="GO:0006449">
    <property type="term" value="P:regulation of translational termination"/>
    <property type="evidence" value="ECO:0007669"/>
    <property type="project" value="UniProtKB-UniRule"/>
</dbReference>
<dbReference type="CDD" id="cd04169">
    <property type="entry name" value="RF3"/>
    <property type="match status" value="1"/>
</dbReference>
<dbReference type="CDD" id="cd03689">
    <property type="entry name" value="RF3_II"/>
    <property type="match status" value="1"/>
</dbReference>
<dbReference type="CDD" id="cd16259">
    <property type="entry name" value="RF3_III"/>
    <property type="match status" value="1"/>
</dbReference>
<dbReference type="FunFam" id="2.40.30.10:FF:000040">
    <property type="entry name" value="Peptide chain release factor 3"/>
    <property type="match status" value="1"/>
</dbReference>
<dbReference type="FunFam" id="3.30.70.3280:FF:000001">
    <property type="entry name" value="Peptide chain release factor 3"/>
    <property type="match status" value="1"/>
</dbReference>
<dbReference type="FunFam" id="3.40.50.300:FF:000542">
    <property type="entry name" value="Peptide chain release factor 3"/>
    <property type="match status" value="1"/>
</dbReference>
<dbReference type="Gene3D" id="3.40.50.300">
    <property type="entry name" value="P-loop containing nucleotide triphosphate hydrolases"/>
    <property type="match status" value="2"/>
</dbReference>
<dbReference type="Gene3D" id="3.30.70.3280">
    <property type="entry name" value="Peptide chain release factor 3, domain III"/>
    <property type="match status" value="1"/>
</dbReference>
<dbReference type="HAMAP" id="MF_00072">
    <property type="entry name" value="Rel_fac_3"/>
    <property type="match status" value="1"/>
</dbReference>
<dbReference type="InterPro" id="IPR053905">
    <property type="entry name" value="EF-G-like_DII"/>
</dbReference>
<dbReference type="InterPro" id="IPR035647">
    <property type="entry name" value="EFG_III/V"/>
</dbReference>
<dbReference type="InterPro" id="IPR031157">
    <property type="entry name" value="G_TR_CS"/>
</dbReference>
<dbReference type="InterPro" id="IPR027417">
    <property type="entry name" value="P-loop_NTPase"/>
</dbReference>
<dbReference type="InterPro" id="IPR004548">
    <property type="entry name" value="PrfC"/>
</dbReference>
<dbReference type="InterPro" id="IPR032090">
    <property type="entry name" value="RF3_C"/>
</dbReference>
<dbReference type="InterPro" id="IPR038467">
    <property type="entry name" value="RF3_dom_3_sf"/>
</dbReference>
<dbReference type="InterPro" id="IPR041732">
    <property type="entry name" value="RF3_GTP-bd"/>
</dbReference>
<dbReference type="InterPro" id="IPR005225">
    <property type="entry name" value="Small_GTP-bd"/>
</dbReference>
<dbReference type="InterPro" id="IPR000795">
    <property type="entry name" value="T_Tr_GTP-bd_dom"/>
</dbReference>
<dbReference type="InterPro" id="IPR009000">
    <property type="entry name" value="Transl_B-barrel_sf"/>
</dbReference>
<dbReference type="NCBIfam" id="TIGR00503">
    <property type="entry name" value="prfC"/>
    <property type="match status" value="1"/>
</dbReference>
<dbReference type="NCBIfam" id="NF001964">
    <property type="entry name" value="PRK00741.1"/>
    <property type="match status" value="1"/>
</dbReference>
<dbReference type="NCBIfam" id="TIGR00231">
    <property type="entry name" value="small_GTP"/>
    <property type="match status" value="1"/>
</dbReference>
<dbReference type="PANTHER" id="PTHR43556">
    <property type="entry name" value="PEPTIDE CHAIN RELEASE FACTOR RF3"/>
    <property type="match status" value="1"/>
</dbReference>
<dbReference type="PANTHER" id="PTHR43556:SF2">
    <property type="entry name" value="PEPTIDE CHAIN RELEASE FACTOR RF3"/>
    <property type="match status" value="1"/>
</dbReference>
<dbReference type="Pfam" id="PF22042">
    <property type="entry name" value="EF-G_D2"/>
    <property type="match status" value="1"/>
</dbReference>
<dbReference type="Pfam" id="PF00009">
    <property type="entry name" value="GTP_EFTU"/>
    <property type="match status" value="1"/>
</dbReference>
<dbReference type="Pfam" id="PF16658">
    <property type="entry name" value="RF3_C"/>
    <property type="match status" value="1"/>
</dbReference>
<dbReference type="PRINTS" id="PR00315">
    <property type="entry name" value="ELONGATNFCT"/>
</dbReference>
<dbReference type="SUPFAM" id="SSF54980">
    <property type="entry name" value="EF-G C-terminal domain-like"/>
    <property type="match status" value="1"/>
</dbReference>
<dbReference type="SUPFAM" id="SSF52540">
    <property type="entry name" value="P-loop containing nucleoside triphosphate hydrolases"/>
    <property type="match status" value="1"/>
</dbReference>
<dbReference type="SUPFAM" id="SSF50447">
    <property type="entry name" value="Translation proteins"/>
    <property type="match status" value="1"/>
</dbReference>
<dbReference type="PROSITE" id="PS00301">
    <property type="entry name" value="G_TR_1"/>
    <property type="match status" value="1"/>
</dbReference>
<dbReference type="PROSITE" id="PS51722">
    <property type="entry name" value="G_TR_2"/>
    <property type="match status" value="1"/>
</dbReference>
<protein>
    <recommendedName>
        <fullName evidence="1">Peptide chain release factor 3</fullName>
        <shortName evidence="1">RF-3</shortName>
    </recommendedName>
</protein>
<comment type="function">
    <text evidence="1">Increases the formation of ribosomal termination complexes and stimulates activities of RF-1 and RF-2. It binds guanine nucleotides and has strong preference for UGA stop codons. It may interact directly with the ribosome. The stimulation of RF-1 and RF-2 is significantly reduced by GTP and GDP, but not by GMP.</text>
</comment>
<comment type="subcellular location">
    <subcellularLocation>
        <location evidence="1">Cytoplasm</location>
    </subcellularLocation>
</comment>
<comment type="similarity">
    <text evidence="1">Belongs to the TRAFAC class translation factor GTPase superfamily. Classic translation factor GTPase family. PrfC subfamily.</text>
</comment>
<organism>
    <name type="scientific">Shewanella sp. (strain MR-4)</name>
    <dbReference type="NCBI Taxonomy" id="60480"/>
    <lineage>
        <taxon>Bacteria</taxon>
        <taxon>Pseudomonadati</taxon>
        <taxon>Pseudomonadota</taxon>
        <taxon>Gammaproteobacteria</taxon>
        <taxon>Alteromonadales</taxon>
        <taxon>Shewanellaceae</taxon>
        <taxon>Shewanella</taxon>
    </lineage>
</organism>
<proteinExistence type="inferred from homology"/>
<reference key="1">
    <citation type="submission" date="2006-08" db="EMBL/GenBank/DDBJ databases">
        <title>Complete sequence of Shewanella sp. MR-4.</title>
        <authorList>
            <consortium name="US DOE Joint Genome Institute"/>
            <person name="Copeland A."/>
            <person name="Lucas S."/>
            <person name="Lapidus A."/>
            <person name="Barry K."/>
            <person name="Detter J.C."/>
            <person name="Glavina del Rio T."/>
            <person name="Hammon N."/>
            <person name="Israni S."/>
            <person name="Dalin E."/>
            <person name="Tice H."/>
            <person name="Pitluck S."/>
            <person name="Kiss H."/>
            <person name="Brettin T."/>
            <person name="Bruce D."/>
            <person name="Han C."/>
            <person name="Tapia R."/>
            <person name="Gilna P."/>
            <person name="Schmutz J."/>
            <person name="Larimer F."/>
            <person name="Land M."/>
            <person name="Hauser L."/>
            <person name="Kyrpides N."/>
            <person name="Mikhailova N."/>
            <person name="Nealson K."/>
            <person name="Konstantinidis K."/>
            <person name="Klappenbach J."/>
            <person name="Tiedje J."/>
            <person name="Richardson P."/>
        </authorList>
    </citation>
    <scope>NUCLEOTIDE SEQUENCE [LARGE SCALE GENOMIC DNA]</scope>
    <source>
        <strain>MR-4</strain>
    </source>
</reference>
<accession>Q0HLF4</accession>
<feature type="chain" id="PRO_1000023679" description="Peptide chain release factor 3">
    <location>
        <begin position="1"/>
        <end position="526"/>
    </location>
</feature>
<feature type="domain" description="tr-type G">
    <location>
        <begin position="9"/>
        <end position="277"/>
    </location>
</feature>
<feature type="binding site" evidence="1">
    <location>
        <begin position="18"/>
        <end position="25"/>
    </location>
    <ligand>
        <name>GTP</name>
        <dbReference type="ChEBI" id="CHEBI:37565"/>
    </ligand>
</feature>
<feature type="binding site" evidence="1">
    <location>
        <begin position="86"/>
        <end position="90"/>
    </location>
    <ligand>
        <name>GTP</name>
        <dbReference type="ChEBI" id="CHEBI:37565"/>
    </ligand>
</feature>
<feature type="binding site" evidence="1">
    <location>
        <begin position="140"/>
        <end position="143"/>
    </location>
    <ligand>
        <name>GTP</name>
        <dbReference type="ChEBI" id="CHEBI:37565"/>
    </ligand>
</feature>